<accession>B0RMR1</accession>
<feature type="chain" id="PRO_0000381143" description="8-amino-7-oxononanoate synthase">
    <location>
        <begin position="1"/>
        <end position="401"/>
    </location>
</feature>
<feature type="binding site" evidence="1">
    <location>
        <position position="24"/>
    </location>
    <ligand>
        <name>substrate</name>
    </ligand>
</feature>
<feature type="binding site" evidence="1">
    <location>
        <begin position="111"/>
        <end position="112"/>
    </location>
    <ligand>
        <name>pyridoxal 5'-phosphate</name>
        <dbReference type="ChEBI" id="CHEBI:597326"/>
    </ligand>
</feature>
<feature type="binding site" evidence="1">
    <location>
        <position position="137"/>
    </location>
    <ligand>
        <name>substrate</name>
    </ligand>
</feature>
<feature type="binding site" evidence="1">
    <location>
        <position position="183"/>
    </location>
    <ligand>
        <name>pyridoxal 5'-phosphate</name>
        <dbReference type="ChEBI" id="CHEBI:597326"/>
    </ligand>
</feature>
<feature type="binding site" evidence="1">
    <location>
        <position position="211"/>
    </location>
    <ligand>
        <name>pyridoxal 5'-phosphate</name>
        <dbReference type="ChEBI" id="CHEBI:597326"/>
    </ligand>
</feature>
<feature type="binding site" evidence="1">
    <location>
        <position position="240"/>
    </location>
    <ligand>
        <name>pyridoxal 5'-phosphate</name>
        <dbReference type="ChEBI" id="CHEBI:597326"/>
    </ligand>
</feature>
<feature type="binding site" evidence="1">
    <location>
        <position position="357"/>
    </location>
    <ligand>
        <name>substrate</name>
    </ligand>
</feature>
<feature type="modified residue" description="N6-(pyridoxal phosphate)lysine" evidence="1">
    <location>
        <position position="243"/>
    </location>
</feature>
<keyword id="KW-0093">Biotin biosynthesis</keyword>
<keyword id="KW-0663">Pyridoxal phosphate</keyword>
<keyword id="KW-0808">Transferase</keyword>
<reference key="1">
    <citation type="journal article" date="2008" name="J. Biotechnol.">
        <title>The genome of Xanthomonas campestris pv. campestris B100 and its use for the reconstruction of metabolic pathways involved in xanthan biosynthesis.</title>
        <authorList>
            <person name="Vorhoelter F.-J."/>
            <person name="Schneiker S."/>
            <person name="Goesmann A."/>
            <person name="Krause L."/>
            <person name="Bekel T."/>
            <person name="Kaiser O."/>
            <person name="Linke B."/>
            <person name="Patschkowski T."/>
            <person name="Rueckert C."/>
            <person name="Schmid J."/>
            <person name="Sidhu V.K."/>
            <person name="Sieber V."/>
            <person name="Tauch A."/>
            <person name="Watt S.A."/>
            <person name="Weisshaar B."/>
            <person name="Becker A."/>
            <person name="Niehaus K."/>
            <person name="Puehler A."/>
        </authorList>
    </citation>
    <scope>NUCLEOTIDE SEQUENCE [LARGE SCALE GENOMIC DNA]</scope>
    <source>
        <strain>B100</strain>
    </source>
</reference>
<name>BIOF_XANCB</name>
<comment type="function">
    <text evidence="1">Catalyzes the decarboxylative condensation of pimeloyl-[acyl-carrier protein] and L-alanine to produce 8-amino-7-oxononanoate (AON), [acyl-carrier protein], and carbon dioxide.</text>
</comment>
<comment type="catalytic activity">
    <reaction evidence="1">
        <text>6-carboxyhexanoyl-[ACP] + L-alanine + H(+) = (8S)-8-amino-7-oxononanoate + holo-[ACP] + CO2</text>
        <dbReference type="Rhea" id="RHEA:42288"/>
        <dbReference type="Rhea" id="RHEA-COMP:9685"/>
        <dbReference type="Rhea" id="RHEA-COMP:9955"/>
        <dbReference type="ChEBI" id="CHEBI:15378"/>
        <dbReference type="ChEBI" id="CHEBI:16526"/>
        <dbReference type="ChEBI" id="CHEBI:57972"/>
        <dbReference type="ChEBI" id="CHEBI:64479"/>
        <dbReference type="ChEBI" id="CHEBI:78846"/>
        <dbReference type="ChEBI" id="CHEBI:149468"/>
        <dbReference type="EC" id="2.3.1.47"/>
    </reaction>
</comment>
<comment type="cofactor">
    <cofactor evidence="1">
        <name>pyridoxal 5'-phosphate</name>
        <dbReference type="ChEBI" id="CHEBI:597326"/>
    </cofactor>
</comment>
<comment type="pathway">
    <text evidence="1">Cofactor biosynthesis; biotin biosynthesis.</text>
</comment>
<comment type="subunit">
    <text evidence="1">Homodimer.</text>
</comment>
<comment type="similarity">
    <text evidence="1">Belongs to the class-II pyridoxal-phosphate-dependent aminotransferase family. BioF subfamily.</text>
</comment>
<gene>
    <name evidence="1" type="primary">bioF</name>
    <name type="ordered locus">xcc-b100_0415</name>
</gene>
<organism>
    <name type="scientific">Xanthomonas campestris pv. campestris (strain B100)</name>
    <dbReference type="NCBI Taxonomy" id="509169"/>
    <lineage>
        <taxon>Bacteria</taxon>
        <taxon>Pseudomonadati</taxon>
        <taxon>Pseudomonadota</taxon>
        <taxon>Gammaproteobacteria</taxon>
        <taxon>Lysobacterales</taxon>
        <taxon>Lysobacteraceae</taxon>
        <taxon>Xanthomonas</taxon>
    </lineage>
</organism>
<proteinExistence type="inferred from homology"/>
<protein>
    <recommendedName>
        <fullName evidence="1">8-amino-7-oxononanoate synthase</fullName>
        <shortName evidence="1">AONS</shortName>
        <ecNumber evidence="1">2.3.1.47</ecNumber>
    </recommendedName>
    <alternativeName>
        <fullName evidence="1">7-keto-8-amino-pelargonic acid synthase</fullName>
        <shortName evidence="1">7-KAP synthase</shortName>
        <shortName evidence="1">KAPA synthase</shortName>
    </alternativeName>
    <alternativeName>
        <fullName evidence="1">8-amino-7-ketopelargonate synthase</fullName>
    </alternativeName>
</protein>
<evidence type="ECO:0000255" key="1">
    <source>
        <dbReference type="HAMAP-Rule" id="MF_01693"/>
    </source>
</evidence>
<dbReference type="EC" id="2.3.1.47" evidence="1"/>
<dbReference type="EMBL" id="AM920689">
    <property type="protein sequence ID" value="CAP49746.1"/>
    <property type="molecule type" value="Genomic_DNA"/>
</dbReference>
<dbReference type="SMR" id="B0RMR1"/>
<dbReference type="KEGG" id="xca:xcc-b100_0415"/>
<dbReference type="HOGENOM" id="CLU_015846_11_2_6"/>
<dbReference type="UniPathway" id="UPA00078"/>
<dbReference type="Proteomes" id="UP000001188">
    <property type="component" value="Chromosome"/>
</dbReference>
<dbReference type="GO" id="GO:0008710">
    <property type="term" value="F:8-amino-7-oxononanoate synthase activity"/>
    <property type="evidence" value="ECO:0007669"/>
    <property type="project" value="UniProtKB-UniRule"/>
</dbReference>
<dbReference type="GO" id="GO:0030170">
    <property type="term" value="F:pyridoxal phosphate binding"/>
    <property type="evidence" value="ECO:0007669"/>
    <property type="project" value="UniProtKB-UniRule"/>
</dbReference>
<dbReference type="GO" id="GO:0009102">
    <property type="term" value="P:biotin biosynthetic process"/>
    <property type="evidence" value="ECO:0007669"/>
    <property type="project" value="UniProtKB-UniRule"/>
</dbReference>
<dbReference type="Gene3D" id="3.90.1150.10">
    <property type="entry name" value="Aspartate Aminotransferase, domain 1"/>
    <property type="match status" value="1"/>
</dbReference>
<dbReference type="Gene3D" id="3.40.640.10">
    <property type="entry name" value="Type I PLP-dependent aspartate aminotransferase-like (Major domain)"/>
    <property type="match status" value="1"/>
</dbReference>
<dbReference type="HAMAP" id="MF_01693">
    <property type="entry name" value="BioF_aminotrans_2"/>
    <property type="match status" value="1"/>
</dbReference>
<dbReference type="InterPro" id="IPR004839">
    <property type="entry name" value="Aminotransferase_I/II_large"/>
</dbReference>
<dbReference type="InterPro" id="IPR050087">
    <property type="entry name" value="AON_synthase_class-II"/>
</dbReference>
<dbReference type="InterPro" id="IPR004723">
    <property type="entry name" value="AONS_Archaea/Proteobacteria"/>
</dbReference>
<dbReference type="InterPro" id="IPR022834">
    <property type="entry name" value="AONS_Proteobacteria"/>
</dbReference>
<dbReference type="InterPro" id="IPR015424">
    <property type="entry name" value="PyrdxlP-dep_Trfase"/>
</dbReference>
<dbReference type="InterPro" id="IPR015421">
    <property type="entry name" value="PyrdxlP-dep_Trfase_major"/>
</dbReference>
<dbReference type="InterPro" id="IPR015422">
    <property type="entry name" value="PyrdxlP-dep_Trfase_small"/>
</dbReference>
<dbReference type="NCBIfam" id="TIGR00858">
    <property type="entry name" value="bioF"/>
    <property type="match status" value="1"/>
</dbReference>
<dbReference type="PANTHER" id="PTHR13693:SF100">
    <property type="entry name" value="8-AMINO-7-OXONONANOATE SYNTHASE"/>
    <property type="match status" value="1"/>
</dbReference>
<dbReference type="PANTHER" id="PTHR13693">
    <property type="entry name" value="CLASS II AMINOTRANSFERASE/8-AMINO-7-OXONONANOATE SYNTHASE"/>
    <property type="match status" value="1"/>
</dbReference>
<dbReference type="Pfam" id="PF00155">
    <property type="entry name" value="Aminotran_1_2"/>
    <property type="match status" value="1"/>
</dbReference>
<dbReference type="SUPFAM" id="SSF53383">
    <property type="entry name" value="PLP-dependent transferases"/>
    <property type="match status" value="1"/>
</dbReference>
<dbReference type="PROSITE" id="PS00599">
    <property type="entry name" value="AA_TRANSFER_CLASS_2"/>
    <property type="match status" value="1"/>
</dbReference>
<sequence length="401" mass="43213">MARPDLHERISSLRKLRVAQERVRVRRQVGRRDGVRLEIDGRWLTGFCSNDYLGLSQQFEVVAALQDAAARDGAGATASHLICGHHTAHETLERDIAEWLGYPSALLFGSGFIANLAVQQALLSEEDDVCVQDRLNHASLLDATRLAGCRLRRYPHLDVEGAMRQLKGAPEGAAMLASDGVFSMDGDVAPLRALSLVARMQEALFYVDDAHGVGVLGPQGRGCVADAGLGVAEVPLQLVTLGKALGGYGAVVVGEEALIRHLAETARPYIYTTALPPAQVAATLAAVRLARRDDWRRTRLTELIGTFRDGARRHGFELMASDTPIQPLLCGEEATVMAMSAALEQAGFLVGAIRPPTVPEGKARLRVTLSALHTPQQVQALVDAIVQARDVVSRQPQRALA</sequence>